<feature type="chain" id="PRO_0000399975" description="Protein NRT1/ PTR FAMILY 2.4">
    <location>
        <begin position="1"/>
        <end position="548"/>
    </location>
</feature>
<feature type="transmembrane region" description="Helical" evidence="2">
    <location>
        <begin position="29"/>
        <end position="49"/>
    </location>
</feature>
<feature type="transmembrane region" description="Helical" evidence="2">
    <location>
        <begin position="65"/>
        <end position="85"/>
    </location>
</feature>
<feature type="transmembrane region" description="Helical" evidence="2">
    <location>
        <begin position="88"/>
        <end position="108"/>
    </location>
</feature>
<feature type="transmembrane region" description="Helical" evidence="2">
    <location>
        <begin position="136"/>
        <end position="156"/>
    </location>
</feature>
<feature type="transmembrane region" description="Helical" evidence="2">
    <location>
        <begin position="172"/>
        <end position="192"/>
    </location>
</feature>
<feature type="transmembrane region" description="Helical" evidence="2">
    <location>
        <begin position="200"/>
        <end position="220"/>
    </location>
</feature>
<feature type="transmembrane region" description="Helical" evidence="2">
    <location>
        <begin position="316"/>
        <end position="336"/>
    </location>
</feature>
<feature type="transmembrane region" description="Helical" evidence="2">
    <location>
        <begin position="354"/>
        <end position="374"/>
    </location>
</feature>
<feature type="transmembrane region" description="Helical" evidence="2">
    <location>
        <begin position="393"/>
        <end position="413"/>
    </location>
</feature>
<feature type="transmembrane region" description="Helical" evidence="2">
    <location>
        <begin position="429"/>
        <end position="449"/>
    </location>
</feature>
<feature type="transmembrane region" description="Helical" evidence="2">
    <location>
        <begin position="468"/>
        <end position="488"/>
    </location>
</feature>
<feature type="transmembrane region" description="Helical" evidence="2">
    <location>
        <begin position="508"/>
        <end position="528"/>
    </location>
</feature>
<feature type="sequence conflict" description="In Ref. 3; BAC41869 and 4; AAO64846." evidence="5" ref="3 4">
    <original>E</original>
    <variation>D</variation>
    <location>
        <position position="10"/>
    </location>
</feature>
<feature type="sequence conflict" description="In Ref. 3; BAC41869 and 4; AAO64846." evidence="5" ref="3 4">
    <original>A</original>
    <variation>V</variation>
    <location>
        <position position="328"/>
    </location>
</feature>
<keyword id="KW-0472">Membrane</keyword>
<keyword id="KW-0534">Nitrate assimilation</keyword>
<keyword id="KW-1185">Reference proteome</keyword>
<keyword id="KW-0812">Transmembrane</keyword>
<keyword id="KW-1133">Transmembrane helix</keyword>
<keyword id="KW-0813">Transport</keyword>
<name>PTR41_ARATH</name>
<protein>
    <recommendedName>
        <fullName>Protein NRT1/ PTR FAMILY 2.4</fullName>
        <shortName>AtNPF2.4</shortName>
    </recommendedName>
    <alternativeName>
        <fullName>Probable nitrate excretion transporter 5</fullName>
    </alternativeName>
    <alternativeName>
        <fullName>Protein NAXT1-like 4</fullName>
    </alternativeName>
</protein>
<comment type="function">
    <text evidence="1">Transporter involved in a passive nitrate efflux.</text>
</comment>
<comment type="subcellular location">
    <subcellularLocation>
        <location evidence="1">Membrane</location>
        <topology evidence="1">Multi-pass membrane protein</topology>
    </subcellularLocation>
</comment>
<comment type="tissue specificity">
    <text evidence="3 4">Strongly expressed in the root stele.</text>
</comment>
<comment type="similarity">
    <text evidence="5">Belongs to the major facilitator superfamily. Proton-dependent oligopeptide transporter (POT/PTR) (TC 2.A.17) family.</text>
</comment>
<sequence length="548" mass="60828">MANSDSGDKEAHRSSKHGGWITLPFMLVTLLGMSITYFGWVMNLIVFLIEEFNIKSIAAVQISNIVNGVVNMLPVVAAILADSFFGNIPVISASAFISLTGISLLTLIASLDYLRPRPCETGSILCQSPSKLQLGILYAALALVITGTAGTRFILASAGANQYKKPKEQGRFFNWYFFTLYGGAITGTTAIVYAQDNASWKLGFGLCVAANLISFIIFVAGKRLYEHDQPLGSPYTSLVRVLVAATMKRKAVISYKDEDYHHRELEKETKTYVAMPSKSFRFLNRAALKTEGDSNNNMWRLCSVQEVEDFKAVLRLVPLWTSVMFLSAPLAVQMSMTVLQAMVMDRKLGPHFKVSAGSMQVIALVSGCVFIILNNWTTYPMYQKLIRKPLTPLQKVGIGHVLTILSMAISAVVEAKRLKTVENSHLMSVLWLVPALVINGIGEAFHFPANIAIFYGEFPESLRNTATSLTSVVMGISFYLSTALIDVIQRTTKWLPNDINHGRVDNVYLVLVIIGVSNFGYFLVCSWFYKYRNLKNDDHEQDLKDVTN</sequence>
<reference key="1">
    <citation type="journal article" date="2000" name="Nature">
        <title>Sequence and analysis of chromosome 3 of the plant Arabidopsis thaliana.</title>
        <authorList>
            <person name="Salanoubat M."/>
            <person name="Lemcke K."/>
            <person name="Rieger M."/>
            <person name="Ansorge W."/>
            <person name="Unseld M."/>
            <person name="Fartmann B."/>
            <person name="Valle G."/>
            <person name="Bloecker H."/>
            <person name="Perez-Alonso M."/>
            <person name="Obermaier B."/>
            <person name="Delseny M."/>
            <person name="Boutry M."/>
            <person name="Grivell L.A."/>
            <person name="Mache R."/>
            <person name="Puigdomenech P."/>
            <person name="De Simone V."/>
            <person name="Choisne N."/>
            <person name="Artiguenave F."/>
            <person name="Robert C."/>
            <person name="Brottier P."/>
            <person name="Wincker P."/>
            <person name="Cattolico L."/>
            <person name="Weissenbach J."/>
            <person name="Saurin W."/>
            <person name="Quetier F."/>
            <person name="Schaefer M."/>
            <person name="Mueller-Auer S."/>
            <person name="Gabel C."/>
            <person name="Fuchs M."/>
            <person name="Benes V."/>
            <person name="Wurmbach E."/>
            <person name="Drzonek H."/>
            <person name="Erfle H."/>
            <person name="Jordan N."/>
            <person name="Bangert S."/>
            <person name="Wiedelmann R."/>
            <person name="Kranz H."/>
            <person name="Voss H."/>
            <person name="Holland R."/>
            <person name="Brandt P."/>
            <person name="Nyakatura G."/>
            <person name="Vezzi A."/>
            <person name="D'Angelo M."/>
            <person name="Pallavicini A."/>
            <person name="Toppo S."/>
            <person name="Simionati B."/>
            <person name="Conrad A."/>
            <person name="Hornischer K."/>
            <person name="Kauer G."/>
            <person name="Loehnert T.-H."/>
            <person name="Nordsiek G."/>
            <person name="Reichelt J."/>
            <person name="Scharfe M."/>
            <person name="Schoen O."/>
            <person name="Bargues M."/>
            <person name="Terol J."/>
            <person name="Climent J."/>
            <person name="Navarro P."/>
            <person name="Collado C."/>
            <person name="Perez-Perez A."/>
            <person name="Ottenwaelder B."/>
            <person name="Duchemin D."/>
            <person name="Cooke R."/>
            <person name="Laudie M."/>
            <person name="Berger-Llauro C."/>
            <person name="Purnelle B."/>
            <person name="Masuy D."/>
            <person name="de Haan M."/>
            <person name="Maarse A.C."/>
            <person name="Alcaraz J.-P."/>
            <person name="Cottet A."/>
            <person name="Casacuberta E."/>
            <person name="Monfort A."/>
            <person name="Argiriou A."/>
            <person name="Flores M."/>
            <person name="Liguori R."/>
            <person name="Vitale D."/>
            <person name="Mannhaupt G."/>
            <person name="Haase D."/>
            <person name="Schoof H."/>
            <person name="Rudd S."/>
            <person name="Zaccaria P."/>
            <person name="Mewes H.-W."/>
            <person name="Mayer K.F.X."/>
            <person name="Kaul S."/>
            <person name="Town C.D."/>
            <person name="Koo H.L."/>
            <person name="Tallon L.J."/>
            <person name="Jenkins J."/>
            <person name="Rooney T."/>
            <person name="Rizzo M."/>
            <person name="Walts A."/>
            <person name="Utterback T."/>
            <person name="Fujii C.Y."/>
            <person name="Shea T.P."/>
            <person name="Creasy T.H."/>
            <person name="Haas B."/>
            <person name="Maiti R."/>
            <person name="Wu D."/>
            <person name="Peterson J."/>
            <person name="Van Aken S."/>
            <person name="Pai G."/>
            <person name="Militscher J."/>
            <person name="Sellers P."/>
            <person name="Gill J.E."/>
            <person name="Feldblyum T.V."/>
            <person name="Preuss D."/>
            <person name="Lin X."/>
            <person name="Nierman W.C."/>
            <person name="Salzberg S.L."/>
            <person name="White O."/>
            <person name="Venter J.C."/>
            <person name="Fraser C.M."/>
            <person name="Kaneko T."/>
            <person name="Nakamura Y."/>
            <person name="Sato S."/>
            <person name="Kato T."/>
            <person name="Asamizu E."/>
            <person name="Sasamoto S."/>
            <person name="Kimura T."/>
            <person name="Idesawa K."/>
            <person name="Kawashima K."/>
            <person name="Kishida Y."/>
            <person name="Kiyokawa C."/>
            <person name="Kohara M."/>
            <person name="Matsumoto M."/>
            <person name="Matsuno A."/>
            <person name="Muraki A."/>
            <person name="Nakayama S."/>
            <person name="Nakazaki N."/>
            <person name="Shinpo S."/>
            <person name="Takeuchi C."/>
            <person name="Wada T."/>
            <person name="Watanabe A."/>
            <person name="Yamada M."/>
            <person name="Yasuda M."/>
            <person name="Tabata S."/>
        </authorList>
    </citation>
    <scope>NUCLEOTIDE SEQUENCE [LARGE SCALE GENOMIC DNA]</scope>
    <source>
        <strain>cv. Columbia</strain>
    </source>
</reference>
<reference key="2">
    <citation type="journal article" date="2017" name="Plant J.">
        <title>Araport11: a complete reannotation of the Arabidopsis thaliana reference genome.</title>
        <authorList>
            <person name="Cheng C.Y."/>
            <person name="Krishnakumar V."/>
            <person name="Chan A.P."/>
            <person name="Thibaud-Nissen F."/>
            <person name="Schobel S."/>
            <person name="Town C.D."/>
        </authorList>
    </citation>
    <scope>GENOME REANNOTATION</scope>
    <source>
        <strain>cv. Columbia</strain>
    </source>
</reference>
<reference key="3">
    <citation type="journal article" date="2002" name="Science">
        <title>Functional annotation of a full-length Arabidopsis cDNA collection.</title>
        <authorList>
            <person name="Seki M."/>
            <person name="Narusaka M."/>
            <person name="Kamiya A."/>
            <person name="Ishida J."/>
            <person name="Satou M."/>
            <person name="Sakurai T."/>
            <person name="Nakajima M."/>
            <person name="Enju A."/>
            <person name="Akiyama K."/>
            <person name="Oono Y."/>
            <person name="Muramatsu M."/>
            <person name="Hayashizaki Y."/>
            <person name="Kawai J."/>
            <person name="Carninci P."/>
            <person name="Itoh M."/>
            <person name="Ishii Y."/>
            <person name="Arakawa T."/>
            <person name="Shibata K."/>
            <person name="Shinagawa A."/>
            <person name="Shinozaki K."/>
        </authorList>
    </citation>
    <scope>NUCLEOTIDE SEQUENCE [LARGE SCALE MRNA]</scope>
    <source>
        <strain>cv. Columbia</strain>
    </source>
</reference>
<reference key="4">
    <citation type="journal article" date="2003" name="Science">
        <title>Empirical analysis of transcriptional activity in the Arabidopsis genome.</title>
        <authorList>
            <person name="Yamada K."/>
            <person name="Lim J."/>
            <person name="Dale J.M."/>
            <person name="Chen H."/>
            <person name="Shinn P."/>
            <person name="Palm C.J."/>
            <person name="Southwick A.M."/>
            <person name="Wu H.C."/>
            <person name="Kim C.J."/>
            <person name="Nguyen M."/>
            <person name="Pham P.K."/>
            <person name="Cheuk R.F."/>
            <person name="Karlin-Newmann G."/>
            <person name="Liu S.X."/>
            <person name="Lam B."/>
            <person name="Sakano H."/>
            <person name="Wu T."/>
            <person name="Yu G."/>
            <person name="Miranda M."/>
            <person name="Quach H.L."/>
            <person name="Tripp M."/>
            <person name="Chang C.H."/>
            <person name="Lee J.M."/>
            <person name="Toriumi M.J."/>
            <person name="Chan M.M."/>
            <person name="Tang C.C."/>
            <person name="Onodera C.S."/>
            <person name="Deng J.M."/>
            <person name="Akiyama K."/>
            <person name="Ansari Y."/>
            <person name="Arakawa T."/>
            <person name="Banh J."/>
            <person name="Banno F."/>
            <person name="Bowser L."/>
            <person name="Brooks S.Y."/>
            <person name="Carninci P."/>
            <person name="Chao Q."/>
            <person name="Choy N."/>
            <person name="Enju A."/>
            <person name="Goldsmith A.D."/>
            <person name="Gurjal M."/>
            <person name="Hansen N.F."/>
            <person name="Hayashizaki Y."/>
            <person name="Johnson-Hopson C."/>
            <person name="Hsuan V.W."/>
            <person name="Iida K."/>
            <person name="Karnes M."/>
            <person name="Khan S."/>
            <person name="Koesema E."/>
            <person name="Ishida J."/>
            <person name="Jiang P.X."/>
            <person name="Jones T."/>
            <person name="Kawai J."/>
            <person name="Kamiya A."/>
            <person name="Meyers C."/>
            <person name="Nakajima M."/>
            <person name="Narusaka M."/>
            <person name="Seki M."/>
            <person name="Sakurai T."/>
            <person name="Satou M."/>
            <person name="Tamse R."/>
            <person name="Vaysberg M."/>
            <person name="Wallender E.K."/>
            <person name="Wong C."/>
            <person name="Yamamura Y."/>
            <person name="Yuan S."/>
            <person name="Shinozaki K."/>
            <person name="Davis R.W."/>
            <person name="Theologis A."/>
            <person name="Ecker J.R."/>
        </authorList>
    </citation>
    <scope>NUCLEOTIDE SEQUENCE [LARGE SCALE MRNA]</scope>
    <source>
        <strain>cv. Columbia</strain>
    </source>
</reference>
<reference key="5">
    <citation type="journal article" date="2007" name="FEBS Lett.">
        <title>Nitrate transporters and peptide transporters.</title>
        <authorList>
            <person name="Tsay Y.F."/>
            <person name="Chiu C.C."/>
            <person name="Tsai C.B."/>
            <person name="Ho C.H."/>
            <person name="Hsu P.K."/>
        </authorList>
    </citation>
    <scope>TISSUE SPECIFICITY</scope>
    <scope>GENE FAMILY</scope>
</reference>
<reference key="6">
    <citation type="journal article" date="2007" name="Plant Cell">
        <title>Nitrate efflux at the root plasma membrane: identification of an Arabidopsis excretion transporter.</title>
        <authorList>
            <person name="Segonzac C."/>
            <person name="Boyer J.C."/>
            <person name="Ipotesi E."/>
            <person name="Szponarski W."/>
            <person name="Tillard P."/>
            <person name="Touraine B."/>
            <person name="Sommerer N."/>
            <person name="Rossignol M."/>
            <person name="Gibrat R."/>
        </authorList>
    </citation>
    <scope>IDENTIFICATION</scope>
    <scope>TISSUE SPECIFICITY</scope>
</reference>
<reference key="7">
    <citation type="journal article" date="2010" name="Plant Cell">
        <title>The Arabidopsis nitrate transporter NRT1.8 functions in nitrate removal from the xylem sap and mediates cadmium tolerance.</title>
        <authorList>
            <person name="Li J.Y."/>
            <person name="Fu Y.L."/>
            <person name="Pike S.M."/>
            <person name="Bao J."/>
            <person name="Tian W."/>
            <person name="Zhang Y."/>
            <person name="Chen C.Z."/>
            <person name="Zhang Y."/>
            <person name="Li H.M."/>
            <person name="Huang J."/>
            <person name="Li L.G."/>
            <person name="Schroeder J.I."/>
            <person name="Gassmann W."/>
            <person name="Gong J.M."/>
        </authorList>
    </citation>
    <scope>GENE FAMILY</scope>
</reference>
<reference key="8">
    <citation type="journal article" date="2014" name="Trends Plant Sci.">
        <title>A unified nomenclature of NITRATE TRANSPORTER 1/PEPTIDE TRANSPORTER family members in plants.</title>
        <authorList>
            <person name="Leran S."/>
            <person name="Varala K."/>
            <person name="Boyer J.C."/>
            <person name="Chiurazzi M."/>
            <person name="Crawford N."/>
            <person name="Daniel-Vedele F."/>
            <person name="David L."/>
            <person name="Dickstein R."/>
            <person name="Fernandez E."/>
            <person name="Forde B."/>
            <person name="Gassmann W."/>
            <person name="Geiger D."/>
            <person name="Gojon A."/>
            <person name="Gong J.M."/>
            <person name="Halkier B.A."/>
            <person name="Harris J.M."/>
            <person name="Hedrich R."/>
            <person name="Limami A.M."/>
            <person name="Rentsch D."/>
            <person name="Seo M."/>
            <person name="Tsay Y.F."/>
            <person name="Zhang M."/>
            <person name="Coruzzi G."/>
            <person name="Lacombe B."/>
        </authorList>
    </citation>
    <scope>GENE FAMILY</scope>
    <scope>NOMENCLATURE</scope>
</reference>
<proteinExistence type="evidence at transcript level"/>
<dbReference type="EMBL" id="AL157735">
    <property type="protein sequence ID" value="CAB75783.1"/>
    <property type="molecule type" value="Genomic_DNA"/>
</dbReference>
<dbReference type="EMBL" id="CP002686">
    <property type="protein sequence ID" value="AEE78061.1"/>
    <property type="molecule type" value="Genomic_DNA"/>
</dbReference>
<dbReference type="EMBL" id="AK117193">
    <property type="protein sequence ID" value="BAC41869.1"/>
    <property type="molecule type" value="mRNA"/>
</dbReference>
<dbReference type="EMBL" id="BT005911">
    <property type="protein sequence ID" value="AAO64846.1"/>
    <property type="molecule type" value="mRNA"/>
</dbReference>
<dbReference type="PIR" id="T47510">
    <property type="entry name" value="T47510"/>
</dbReference>
<dbReference type="RefSeq" id="NP_190156.1">
    <property type="nucleotide sequence ID" value="NM_114439.3"/>
</dbReference>
<dbReference type="SMR" id="Q9M173"/>
<dbReference type="BioGRID" id="9032">
    <property type="interactions" value="5"/>
</dbReference>
<dbReference type="FunCoup" id="Q9M173">
    <property type="interactions" value="1"/>
</dbReference>
<dbReference type="IntAct" id="Q9M173">
    <property type="interactions" value="5"/>
</dbReference>
<dbReference type="STRING" id="3702.Q9M173"/>
<dbReference type="PaxDb" id="3702-AT3G45700.1"/>
<dbReference type="ProteomicsDB" id="226440"/>
<dbReference type="EnsemblPlants" id="AT3G45700.1">
    <property type="protein sequence ID" value="AT3G45700.1"/>
    <property type="gene ID" value="AT3G45700"/>
</dbReference>
<dbReference type="GeneID" id="823712"/>
<dbReference type="Gramene" id="AT3G45700.1">
    <property type="protein sequence ID" value="AT3G45700.1"/>
    <property type="gene ID" value="AT3G45700"/>
</dbReference>
<dbReference type="KEGG" id="ath:AT3G45700"/>
<dbReference type="Araport" id="AT3G45700"/>
<dbReference type="TAIR" id="AT3G45700">
    <property type="gene designation" value="NPF2.4"/>
</dbReference>
<dbReference type="eggNOG" id="KOG1237">
    <property type="taxonomic scope" value="Eukaryota"/>
</dbReference>
<dbReference type="HOGENOM" id="CLU_009313_4_2_1"/>
<dbReference type="InParanoid" id="Q9M173"/>
<dbReference type="OMA" id="IAIQANM"/>
<dbReference type="PhylomeDB" id="Q9M173"/>
<dbReference type="PRO" id="PR:Q9M173"/>
<dbReference type="Proteomes" id="UP000006548">
    <property type="component" value="Chromosome 3"/>
</dbReference>
<dbReference type="ExpressionAtlas" id="Q9M173">
    <property type="expression patterns" value="baseline and differential"/>
</dbReference>
<dbReference type="GO" id="GO:0005886">
    <property type="term" value="C:plasma membrane"/>
    <property type="evidence" value="ECO:0000314"/>
    <property type="project" value="TAIR"/>
</dbReference>
<dbReference type="GO" id="GO:0015108">
    <property type="term" value="F:chloride transmembrane transporter activity"/>
    <property type="evidence" value="ECO:0000314"/>
    <property type="project" value="TAIR"/>
</dbReference>
<dbReference type="GO" id="GO:1902476">
    <property type="term" value="P:chloride transmembrane transport"/>
    <property type="evidence" value="ECO:0000314"/>
    <property type="project" value="TAIR"/>
</dbReference>
<dbReference type="GO" id="GO:0042128">
    <property type="term" value="P:nitrate assimilation"/>
    <property type="evidence" value="ECO:0007669"/>
    <property type="project" value="UniProtKB-KW"/>
</dbReference>
<dbReference type="GO" id="GO:0006857">
    <property type="term" value="P:oligopeptide transport"/>
    <property type="evidence" value="ECO:0007669"/>
    <property type="project" value="InterPro"/>
</dbReference>
<dbReference type="CDD" id="cd17416">
    <property type="entry name" value="MFS_NPF1_2"/>
    <property type="match status" value="1"/>
</dbReference>
<dbReference type="Gene3D" id="1.20.1250.20">
    <property type="entry name" value="MFS general substrate transporter like domains"/>
    <property type="match status" value="1"/>
</dbReference>
<dbReference type="InterPro" id="IPR036259">
    <property type="entry name" value="MFS_trans_sf"/>
</dbReference>
<dbReference type="InterPro" id="IPR000109">
    <property type="entry name" value="POT_fam"/>
</dbReference>
<dbReference type="InterPro" id="IPR018456">
    <property type="entry name" value="PTR2_symporter_CS"/>
</dbReference>
<dbReference type="PANTHER" id="PTHR11654">
    <property type="entry name" value="OLIGOPEPTIDE TRANSPORTER-RELATED"/>
    <property type="match status" value="1"/>
</dbReference>
<dbReference type="Pfam" id="PF00854">
    <property type="entry name" value="PTR2"/>
    <property type="match status" value="1"/>
</dbReference>
<dbReference type="SUPFAM" id="SSF103473">
    <property type="entry name" value="MFS general substrate transporter"/>
    <property type="match status" value="1"/>
</dbReference>
<dbReference type="PROSITE" id="PS01022">
    <property type="entry name" value="PTR2_1"/>
    <property type="match status" value="1"/>
</dbReference>
<evidence type="ECO:0000250" key="1"/>
<evidence type="ECO:0000255" key="2"/>
<evidence type="ECO:0000269" key="3">
    <source>
    </source>
</evidence>
<evidence type="ECO:0000269" key="4">
    <source>
    </source>
</evidence>
<evidence type="ECO:0000305" key="5"/>
<organism>
    <name type="scientific">Arabidopsis thaliana</name>
    <name type="common">Mouse-ear cress</name>
    <dbReference type="NCBI Taxonomy" id="3702"/>
    <lineage>
        <taxon>Eukaryota</taxon>
        <taxon>Viridiplantae</taxon>
        <taxon>Streptophyta</taxon>
        <taxon>Embryophyta</taxon>
        <taxon>Tracheophyta</taxon>
        <taxon>Spermatophyta</taxon>
        <taxon>Magnoliopsida</taxon>
        <taxon>eudicotyledons</taxon>
        <taxon>Gunneridae</taxon>
        <taxon>Pentapetalae</taxon>
        <taxon>rosids</taxon>
        <taxon>malvids</taxon>
        <taxon>Brassicales</taxon>
        <taxon>Brassicaceae</taxon>
        <taxon>Camelineae</taxon>
        <taxon>Arabidopsis</taxon>
    </lineage>
</organism>
<gene>
    <name type="primary">NPF2.4</name>
    <name type="ordered locus">At3g45700</name>
    <name type="ORF">T6D9.30</name>
</gene>
<accession>Q9M173</accession>
<accession>Q8GZ59</accession>